<name>CHED_METFK</name>
<evidence type="ECO:0000255" key="1">
    <source>
        <dbReference type="HAMAP-Rule" id="MF_01440"/>
    </source>
</evidence>
<feature type="chain" id="PRO_0000251044" description="Probable chemoreceptor glutamine deamidase CheD">
    <location>
        <begin position="1"/>
        <end position="203"/>
    </location>
</feature>
<sequence>MANPIEEQLATNLYFDKTFNCEAAKILPGEYYTTNQDIVIVTVLGSCVSACIRDKVSGIGGMNHFMLPEGNPADANNPVSESARYGTYAMEVLINQLLKNGARRENLEAKIFGGGNVLSGFTAINIGEKNAAFVRKYLRDENIRVVGEDLNDIYPRKVYFFPRTGRVLVKKLKQMHNNTLISREESYAKRLKANKVAGEVELF</sequence>
<gene>
    <name evidence="1" type="primary">cheD</name>
    <name type="ordered locus">Mfla_1931</name>
</gene>
<dbReference type="EC" id="3.5.1.44" evidence="1"/>
<dbReference type="EMBL" id="CP000284">
    <property type="protein sequence ID" value="ABE50198.1"/>
    <property type="molecule type" value="Genomic_DNA"/>
</dbReference>
<dbReference type="RefSeq" id="WP_011480152.1">
    <property type="nucleotide sequence ID" value="NC_007947.1"/>
</dbReference>
<dbReference type="SMR" id="Q1GZY9"/>
<dbReference type="STRING" id="265072.Mfla_1931"/>
<dbReference type="KEGG" id="mfa:Mfla_1931"/>
<dbReference type="eggNOG" id="COG1871">
    <property type="taxonomic scope" value="Bacteria"/>
</dbReference>
<dbReference type="HOGENOM" id="CLU_087854_0_0_4"/>
<dbReference type="OrthoDB" id="9807202at2"/>
<dbReference type="Proteomes" id="UP000002440">
    <property type="component" value="Chromosome"/>
</dbReference>
<dbReference type="GO" id="GO:0050568">
    <property type="term" value="F:protein-glutamine glutaminase activity"/>
    <property type="evidence" value="ECO:0007669"/>
    <property type="project" value="UniProtKB-UniRule"/>
</dbReference>
<dbReference type="GO" id="GO:0006935">
    <property type="term" value="P:chemotaxis"/>
    <property type="evidence" value="ECO:0007669"/>
    <property type="project" value="UniProtKB-UniRule"/>
</dbReference>
<dbReference type="CDD" id="cd16352">
    <property type="entry name" value="CheD"/>
    <property type="match status" value="1"/>
</dbReference>
<dbReference type="Gene3D" id="3.30.1330.200">
    <property type="match status" value="1"/>
</dbReference>
<dbReference type="HAMAP" id="MF_01440">
    <property type="entry name" value="CheD"/>
    <property type="match status" value="1"/>
</dbReference>
<dbReference type="InterPro" id="IPR038592">
    <property type="entry name" value="CheD-like_sf"/>
</dbReference>
<dbReference type="InterPro" id="IPR005659">
    <property type="entry name" value="Chemorcpt_Glu_NH3ase_CheD"/>
</dbReference>
<dbReference type="InterPro" id="IPR011324">
    <property type="entry name" value="Cytotoxic_necrot_fac-like_cat"/>
</dbReference>
<dbReference type="NCBIfam" id="NF010013">
    <property type="entry name" value="PRK13487.1"/>
    <property type="match status" value="1"/>
</dbReference>
<dbReference type="NCBIfam" id="NF010014">
    <property type="entry name" value="PRK13489.1"/>
    <property type="match status" value="1"/>
</dbReference>
<dbReference type="PANTHER" id="PTHR35147">
    <property type="entry name" value="CHEMORECEPTOR GLUTAMINE DEAMIDASE CHED-RELATED"/>
    <property type="match status" value="1"/>
</dbReference>
<dbReference type="PANTHER" id="PTHR35147:SF2">
    <property type="entry name" value="CHEMORECEPTOR GLUTAMINE DEAMIDASE CHED-RELATED"/>
    <property type="match status" value="1"/>
</dbReference>
<dbReference type="Pfam" id="PF03975">
    <property type="entry name" value="CheD"/>
    <property type="match status" value="1"/>
</dbReference>
<dbReference type="SUPFAM" id="SSF64438">
    <property type="entry name" value="CNF1/YfiH-like putative cysteine hydrolases"/>
    <property type="match status" value="1"/>
</dbReference>
<organism>
    <name type="scientific">Methylobacillus flagellatus (strain ATCC 51484 / DSM 6875 / VKM B-1610 / KT)</name>
    <dbReference type="NCBI Taxonomy" id="265072"/>
    <lineage>
        <taxon>Bacteria</taxon>
        <taxon>Pseudomonadati</taxon>
        <taxon>Pseudomonadota</taxon>
        <taxon>Betaproteobacteria</taxon>
        <taxon>Nitrosomonadales</taxon>
        <taxon>Methylophilaceae</taxon>
        <taxon>Methylobacillus</taxon>
    </lineage>
</organism>
<protein>
    <recommendedName>
        <fullName evidence="1">Probable chemoreceptor glutamine deamidase CheD</fullName>
        <ecNumber evidence="1">3.5.1.44</ecNumber>
    </recommendedName>
</protein>
<proteinExistence type="inferred from homology"/>
<reference key="1">
    <citation type="submission" date="2006-03" db="EMBL/GenBank/DDBJ databases">
        <title>Complete sequence of Methylobacillus flagellatus KT.</title>
        <authorList>
            <consortium name="US DOE Joint Genome Institute"/>
            <person name="Copeland A."/>
            <person name="Lucas S."/>
            <person name="Lapidus A."/>
            <person name="Barry K."/>
            <person name="Detter J.C."/>
            <person name="Glavina del Rio T."/>
            <person name="Hammon N."/>
            <person name="Israni S."/>
            <person name="Dalin E."/>
            <person name="Tice H."/>
            <person name="Pitluck S."/>
            <person name="Brettin T."/>
            <person name="Bruce D."/>
            <person name="Han C."/>
            <person name="Tapia R."/>
            <person name="Saunders E."/>
            <person name="Gilna P."/>
            <person name="Schmutz J."/>
            <person name="Larimer F."/>
            <person name="Land M."/>
            <person name="Kyrpides N."/>
            <person name="Anderson I."/>
            <person name="Richardson P."/>
        </authorList>
    </citation>
    <scope>NUCLEOTIDE SEQUENCE [LARGE SCALE GENOMIC DNA]</scope>
    <source>
        <strain>ATCC 51484 / DSM 6875 / VKM B-1610 / KT</strain>
    </source>
</reference>
<comment type="function">
    <text evidence="1">Probably deamidates glutamine residues to glutamate on methyl-accepting chemotaxis receptors (MCPs), playing an important role in chemotaxis.</text>
</comment>
<comment type="catalytic activity">
    <reaction evidence="1">
        <text>L-glutaminyl-[protein] + H2O = L-glutamyl-[protein] + NH4(+)</text>
        <dbReference type="Rhea" id="RHEA:16441"/>
        <dbReference type="Rhea" id="RHEA-COMP:10207"/>
        <dbReference type="Rhea" id="RHEA-COMP:10208"/>
        <dbReference type="ChEBI" id="CHEBI:15377"/>
        <dbReference type="ChEBI" id="CHEBI:28938"/>
        <dbReference type="ChEBI" id="CHEBI:29973"/>
        <dbReference type="ChEBI" id="CHEBI:30011"/>
        <dbReference type="EC" id="3.5.1.44"/>
    </reaction>
</comment>
<comment type="similarity">
    <text evidence="1">Belongs to the CheD family.</text>
</comment>
<keyword id="KW-0145">Chemotaxis</keyword>
<keyword id="KW-0378">Hydrolase</keyword>
<keyword id="KW-1185">Reference proteome</keyword>
<accession>Q1GZY9</accession>